<feature type="chain" id="PRO_0000092275" description="Sulfate/thiosulfate import ATP-binding protein CysA">
    <location>
        <begin position="1"/>
        <end position="362"/>
    </location>
</feature>
<feature type="domain" description="ABC transporter" evidence="1">
    <location>
        <begin position="13"/>
        <end position="243"/>
    </location>
</feature>
<feature type="binding site" evidence="1">
    <location>
        <begin position="45"/>
        <end position="52"/>
    </location>
    <ligand>
        <name>ATP</name>
        <dbReference type="ChEBI" id="CHEBI:30616"/>
    </ligand>
</feature>
<evidence type="ECO:0000255" key="1">
    <source>
        <dbReference type="HAMAP-Rule" id="MF_01701"/>
    </source>
</evidence>
<accession>Q73XU8</accession>
<protein>
    <recommendedName>
        <fullName evidence="1">Sulfate/thiosulfate import ATP-binding protein CysA</fullName>
        <ecNumber evidence="1">7.3.2.3</ecNumber>
    </recommendedName>
    <alternativeName>
        <fullName evidence="1">Sulfate-transporting ATPase</fullName>
    </alternativeName>
</protein>
<proteinExistence type="inferred from homology"/>
<sequence>MIDAGTDRGDIAITVRDAYKRYGDFVALDHVDFVVPTGSLTALLGPSGSGKSTLLRTIAGLDQPDTGTVTIYGRDVTRVPPQRRGIGFVFQHYAAFKHLTVRDNVAYGLKVRKRPKAEIKAKVDNLLEVVGLSGFQGRYPNQLAGGQRQRMALARALAVDPQVLLLDEPFGALDAKVREDLRAWLRRLHDEVHVTTVLVTHDQAEALDVADRIAVLNQGRIEQIGSPTEVYDAPTNAFVMSFLGAVSTLNGTLVRPHDIRVGRTPEMAVAAEDGTAESTGVARAIVDRVVKLGFEVRVELTSAATGGPFTAQITRGDAEALALREGDTVYVRATRVPPITAGATTVPALSRDGADEATLTSA</sequence>
<comment type="function">
    <text evidence="1">Part of the ABC transporter complex CysAWTP involved in sulfate/thiosulfate import. Responsible for energy coupling to the transport system.</text>
</comment>
<comment type="catalytic activity">
    <reaction evidence="1">
        <text>sulfate(out) + ATP + H2O = sulfate(in) + ADP + phosphate + H(+)</text>
        <dbReference type="Rhea" id="RHEA:10192"/>
        <dbReference type="ChEBI" id="CHEBI:15377"/>
        <dbReference type="ChEBI" id="CHEBI:15378"/>
        <dbReference type="ChEBI" id="CHEBI:16189"/>
        <dbReference type="ChEBI" id="CHEBI:30616"/>
        <dbReference type="ChEBI" id="CHEBI:43474"/>
        <dbReference type="ChEBI" id="CHEBI:456216"/>
        <dbReference type="EC" id="7.3.2.3"/>
    </reaction>
</comment>
<comment type="catalytic activity">
    <reaction evidence="1">
        <text>thiosulfate(out) + ATP + H2O = thiosulfate(in) + ADP + phosphate + H(+)</text>
        <dbReference type="Rhea" id="RHEA:29871"/>
        <dbReference type="ChEBI" id="CHEBI:15377"/>
        <dbReference type="ChEBI" id="CHEBI:15378"/>
        <dbReference type="ChEBI" id="CHEBI:30616"/>
        <dbReference type="ChEBI" id="CHEBI:33542"/>
        <dbReference type="ChEBI" id="CHEBI:43474"/>
        <dbReference type="ChEBI" id="CHEBI:456216"/>
        <dbReference type="EC" id="7.3.2.3"/>
    </reaction>
</comment>
<comment type="subunit">
    <text evidence="1">The complex is composed of two ATP-binding proteins (CysA), two transmembrane proteins (CysT and CysW) and a solute-binding protein (CysP).</text>
</comment>
<comment type="subcellular location">
    <subcellularLocation>
        <location evidence="1">Cell membrane</location>
        <topology evidence="1">Peripheral membrane protein</topology>
    </subcellularLocation>
</comment>
<comment type="similarity">
    <text evidence="1">Belongs to the ABC transporter superfamily. Sulfate/tungstate importer (TC 3.A.1.6) family.</text>
</comment>
<name>CYSA_MYCPA</name>
<dbReference type="EC" id="7.3.2.3" evidence="1"/>
<dbReference type="EMBL" id="AE016958">
    <property type="protein sequence ID" value="AAS04527.1"/>
    <property type="molecule type" value="Genomic_DNA"/>
</dbReference>
<dbReference type="RefSeq" id="WP_010949519.1">
    <property type="nucleotide sequence ID" value="NZ_CP106873.1"/>
</dbReference>
<dbReference type="SMR" id="Q73XU8"/>
<dbReference type="STRING" id="262316.MAP_2210c"/>
<dbReference type="KEGG" id="mpa:MAP_2210c"/>
<dbReference type="PATRIC" id="fig|262316.17.peg.2350"/>
<dbReference type="eggNOG" id="COG1118">
    <property type="taxonomic scope" value="Bacteria"/>
</dbReference>
<dbReference type="HOGENOM" id="CLU_000604_1_1_11"/>
<dbReference type="Proteomes" id="UP000000580">
    <property type="component" value="Chromosome"/>
</dbReference>
<dbReference type="GO" id="GO:0043190">
    <property type="term" value="C:ATP-binding cassette (ABC) transporter complex"/>
    <property type="evidence" value="ECO:0007669"/>
    <property type="project" value="InterPro"/>
</dbReference>
<dbReference type="GO" id="GO:0015419">
    <property type="term" value="F:ABC-type sulfate transporter activity"/>
    <property type="evidence" value="ECO:0007669"/>
    <property type="project" value="InterPro"/>
</dbReference>
<dbReference type="GO" id="GO:0102025">
    <property type="term" value="F:ABC-type thiosulfate transporter activity"/>
    <property type="evidence" value="ECO:0007669"/>
    <property type="project" value="RHEA"/>
</dbReference>
<dbReference type="GO" id="GO:0005524">
    <property type="term" value="F:ATP binding"/>
    <property type="evidence" value="ECO:0007669"/>
    <property type="project" value="UniProtKB-KW"/>
</dbReference>
<dbReference type="GO" id="GO:0016887">
    <property type="term" value="F:ATP hydrolysis activity"/>
    <property type="evidence" value="ECO:0007669"/>
    <property type="project" value="InterPro"/>
</dbReference>
<dbReference type="CDD" id="cd03296">
    <property type="entry name" value="ABC_CysA_sulfate_importer"/>
    <property type="match status" value="1"/>
</dbReference>
<dbReference type="FunFam" id="3.40.50.300:FF:001655">
    <property type="entry name" value="Sulfate/thiosulfate import ATP-binding protein CysA"/>
    <property type="match status" value="1"/>
</dbReference>
<dbReference type="Gene3D" id="3.40.50.300">
    <property type="entry name" value="P-loop containing nucleotide triphosphate hydrolases"/>
    <property type="match status" value="1"/>
</dbReference>
<dbReference type="InterPro" id="IPR003593">
    <property type="entry name" value="AAA+_ATPase"/>
</dbReference>
<dbReference type="InterPro" id="IPR050093">
    <property type="entry name" value="ABC_SmlMolc_Importer"/>
</dbReference>
<dbReference type="InterPro" id="IPR003439">
    <property type="entry name" value="ABC_transporter-like_ATP-bd"/>
</dbReference>
<dbReference type="InterPro" id="IPR017871">
    <property type="entry name" value="ABC_transporter-like_CS"/>
</dbReference>
<dbReference type="InterPro" id="IPR008995">
    <property type="entry name" value="Mo/tungstate-bd_C_term_dom"/>
</dbReference>
<dbReference type="InterPro" id="IPR027417">
    <property type="entry name" value="P-loop_NTPase"/>
</dbReference>
<dbReference type="InterPro" id="IPR005666">
    <property type="entry name" value="Sulph_transpt1"/>
</dbReference>
<dbReference type="InterPro" id="IPR024765">
    <property type="entry name" value="TOBE-like"/>
</dbReference>
<dbReference type="NCBIfam" id="TIGR00968">
    <property type="entry name" value="3a0106s01"/>
    <property type="match status" value="1"/>
</dbReference>
<dbReference type="PANTHER" id="PTHR42781">
    <property type="entry name" value="SPERMIDINE/PUTRESCINE IMPORT ATP-BINDING PROTEIN POTA"/>
    <property type="match status" value="1"/>
</dbReference>
<dbReference type="PANTHER" id="PTHR42781:SF4">
    <property type="entry name" value="SPERMIDINE_PUTRESCINE IMPORT ATP-BINDING PROTEIN POTA"/>
    <property type="match status" value="1"/>
</dbReference>
<dbReference type="Pfam" id="PF00005">
    <property type="entry name" value="ABC_tran"/>
    <property type="match status" value="1"/>
</dbReference>
<dbReference type="Pfam" id="PF12857">
    <property type="entry name" value="TOBE_3"/>
    <property type="match status" value="1"/>
</dbReference>
<dbReference type="SMART" id="SM00382">
    <property type="entry name" value="AAA"/>
    <property type="match status" value="1"/>
</dbReference>
<dbReference type="SUPFAM" id="SSF50331">
    <property type="entry name" value="MOP-like"/>
    <property type="match status" value="1"/>
</dbReference>
<dbReference type="SUPFAM" id="SSF52540">
    <property type="entry name" value="P-loop containing nucleoside triphosphate hydrolases"/>
    <property type="match status" value="1"/>
</dbReference>
<dbReference type="PROSITE" id="PS00211">
    <property type="entry name" value="ABC_TRANSPORTER_1"/>
    <property type="match status" value="1"/>
</dbReference>
<dbReference type="PROSITE" id="PS50893">
    <property type="entry name" value="ABC_TRANSPORTER_2"/>
    <property type="match status" value="1"/>
</dbReference>
<dbReference type="PROSITE" id="PS51237">
    <property type="entry name" value="CYSA"/>
    <property type="match status" value="1"/>
</dbReference>
<keyword id="KW-0067">ATP-binding</keyword>
<keyword id="KW-1003">Cell membrane</keyword>
<keyword id="KW-0472">Membrane</keyword>
<keyword id="KW-0547">Nucleotide-binding</keyword>
<keyword id="KW-1185">Reference proteome</keyword>
<keyword id="KW-0764">Sulfate transport</keyword>
<keyword id="KW-1278">Translocase</keyword>
<keyword id="KW-0813">Transport</keyword>
<organism>
    <name type="scientific">Mycolicibacterium paratuberculosis (strain ATCC BAA-968 / K-10)</name>
    <name type="common">Mycobacterium paratuberculosis</name>
    <dbReference type="NCBI Taxonomy" id="262316"/>
    <lineage>
        <taxon>Bacteria</taxon>
        <taxon>Bacillati</taxon>
        <taxon>Actinomycetota</taxon>
        <taxon>Actinomycetes</taxon>
        <taxon>Mycobacteriales</taxon>
        <taxon>Mycobacteriaceae</taxon>
        <taxon>Mycobacterium</taxon>
        <taxon>Mycobacterium avium complex (MAC)</taxon>
    </lineage>
</organism>
<gene>
    <name evidence="1" type="primary">cysA</name>
    <name type="ordered locus">MAP_2210c</name>
</gene>
<reference key="1">
    <citation type="journal article" date="2005" name="Proc. Natl. Acad. Sci. U.S.A.">
        <title>The complete genome sequence of Mycobacterium avium subspecies paratuberculosis.</title>
        <authorList>
            <person name="Li L."/>
            <person name="Bannantine J.P."/>
            <person name="Zhang Q."/>
            <person name="Amonsin A."/>
            <person name="May B.J."/>
            <person name="Alt D."/>
            <person name="Banerji N."/>
            <person name="Kanjilal S."/>
            <person name="Kapur V."/>
        </authorList>
    </citation>
    <scope>NUCLEOTIDE SEQUENCE [LARGE SCALE GENOMIC DNA]</scope>
    <source>
        <strain>ATCC BAA-968 / K-10</strain>
    </source>
</reference>